<organism>
    <name type="scientific">Mycobacterium tuberculosis (strain ATCC 25618 / H37Rv)</name>
    <dbReference type="NCBI Taxonomy" id="83332"/>
    <lineage>
        <taxon>Bacteria</taxon>
        <taxon>Bacillati</taxon>
        <taxon>Actinomycetota</taxon>
        <taxon>Actinomycetes</taxon>
        <taxon>Mycobacteriales</taxon>
        <taxon>Mycobacteriaceae</taxon>
        <taxon>Mycobacterium</taxon>
        <taxon>Mycobacterium tuberculosis complex</taxon>
    </lineage>
</organism>
<comment type="function">
    <text evidence="2">Involved in glycosylation steps downstream of mono-O-methyl-glycosyl-p-hydroxybenzoic acid derivative (p-HBAD I) and 2-O-methyl-rhamnosyl-phenolphthiocerol dimycocerosate (mycoside B) during the p-hydroxybenzoic acid derivatives (p-HBAD) and glycosylated phenolphthiocerol dimycocerosates (PGL) biosynthesis.</text>
</comment>
<comment type="similarity">
    <text evidence="3">Belongs to the UDP-glycosyltransferase family.</text>
</comment>
<comment type="sequence caution" evidence="3">
    <conflict type="frameshift">
        <sequence resource="EMBL-CDS" id="AAA50940"/>
    </conflict>
</comment>
<proteinExistence type="evidence at protein level"/>
<reference key="1">
    <citation type="submission" date="1994-09" db="EMBL/GenBank/DDBJ databases">
        <authorList>
            <person name="Smith D.R."/>
            <person name="Robison K."/>
        </authorList>
    </citation>
    <scope>NUCLEOTIDE SEQUENCE [GENOMIC DNA]</scope>
</reference>
<reference key="2">
    <citation type="journal article" date="1998" name="Nature">
        <title>Deciphering the biology of Mycobacterium tuberculosis from the complete genome sequence.</title>
        <authorList>
            <person name="Cole S.T."/>
            <person name="Brosch R."/>
            <person name="Parkhill J."/>
            <person name="Garnier T."/>
            <person name="Churcher C.M."/>
            <person name="Harris D.E."/>
            <person name="Gordon S.V."/>
            <person name="Eiglmeier K."/>
            <person name="Gas S."/>
            <person name="Barry C.E. III"/>
            <person name="Tekaia F."/>
            <person name="Badcock K."/>
            <person name="Basham D."/>
            <person name="Brown D."/>
            <person name="Chillingworth T."/>
            <person name="Connor R."/>
            <person name="Davies R.M."/>
            <person name="Devlin K."/>
            <person name="Feltwell T."/>
            <person name="Gentles S."/>
            <person name="Hamlin N."/>
            <person name="Holroyd S."/>
            <person name="Hornsby T."/>
            <person name="Jagels K."/>
            <person name="Krogh A."/>
            <person name="McLean J."/>
            <person name="Moule S."/>
            <person name="Murphy L.D."/>
            <person name="Oliver S."/>
            <person name="Osborne J."/>
            <person name="Quail M.A."/>
            <person name="Rajandream M.A."/>
            <person name="Rogers J."/>
            <person name="Rutter S."/>
            <person name="Seeger K."/>
            <person name="Skelton S."/>
            <person name="Squares S."/>
            <person name="Squares R."/>
            <person name="Sulston J.E."/>
            <person name="Taylor K."/>
            <person name="Whitehead S."/>
            <person name="Barrell B.G."/>
        </authorList>
    </citation>
    <scope>NUCLEOTIDE SEQUENCE [LARGE SCALE GENOMIC DNA]</scope>
    <source>
        <strain>ATCC 25618 / H37Rv</strain>
    </source>
</reference>
<reference key="3">
    <citation type="journal article" date="2004" name="J. Biol. Chem.">
        <title>Characterization of three glycosyltransferases involved in the biosynthesis of the phenolic glycolipid antigens from the Mycobacterium tuberculosis complex.</title>
        <authorList>
            <person name="Perez E."/>
            <person name="Constant P."/>
            <person name="Lemassu A."/>
            <person name="Laval F."/>
            <person name="Daffe M."/>
            <person name="Guilhot C."/>
        </authorList>
    </citation>
    <scope>FUNCTION AS GLYCOSYLTRANSFERASE</scope>
    <source>
        <strain>ATCC 25618 / H37Rv</strain>
    </source>
</reference>
<reference key="4">
    <citation type="journal article" date="2011" name="Mol. Cell. Proteomics">
        <title>Proteogenomic analysis of Mycobacterium tuberculosis by high resolution mass spectrometry.</title>
        <authorList>
            <person name="Kelkar D.S."/>
            <person name="Kumar D."/>
            <person name="Kumar P."/>
            <person name="Balakrishnan L."/>
            <person name="Muthusamy B."/>
            <person name="Yadav A.K."/>
            <person name="Shrivastava P."/>
            <person name="Marimuthu A."/>
            <person name="Anand S."/>
            <person name="Sundaram H."/>
            <person name="Kingsbury R."/>
            <person name="Harsha H.C."/>
            <person name="Nair B."/>
            <person name="Prasad T.S."/>
            <person name="Chauhan D.S."/>
            <person name="Katoch K."/>
            <person name="Katoch V.M."/>
            <person name="Kumar P."/>
            <person name="Chaerkady R."/>
            <person name="Ramachandran S."/>
            <person name="Dash D."/>
            <person name="Pandey A."/>
        </authorList>
    </citation>
    <scope>IDENTIFICATION BY MASS SPECTROMETRY [LARGE SCALE ANALYSIS]</scope>
    <source>
        <strain>ATCC 25618 / H37Rv</strain>
    </source>
</reference>
<dbReference type="EC" id="2.4.1.-"/>
<dbReference type="EMBL" id="U00024">
    <property type="protein sequence ID" value="AAA50940.1"/>
    <property type="status" value="ALT_FRAME"/>
    <property type="molecule type" value="Genomic_DNA"/>
</dbReference>
<dbReference type="EMBL" id="AL123456">
    <property type="protein sequence ID" value="CCP45762.1"/>
    <property type="molecule type" value="Genomic_DNA"/>
</dbReference>
<dbReference type="PIR" id="C70670">
    <property type="entry name" value="C70670"/>
</dbReference>
<dbReference type="RefSeq" id="NP_217474.1">
    <property type="nucleotide sequence ID" value="NC_000962.3"/>
</dbReference>
<dbReference type="RefSeq" id="WP_003899557.1">
    <property type="nucleotide sequence ID" value="NZ_NVQJ01000015.1"/>
</dbReference>
<dbReference type="SMR" id="P9WFR1"/>
<dbReference type="FunCoup" id="P9WFR1">
    <property type="interactions" value="12"/>
</dbReference>
<dbReference type="STRING" id="83332.Rv2958c"/>
<dbReference type="PaxDb" id="83332-Rv2958c"/>
<dbReference type="DNASU" id="887816"/>
<dbReference type="GeneID" id="887816"/>
<dbReference type="KEGG" id="mtu:Rv2958c"/>
<dbReference type="KEGG" id="mtv:RVBD_2958c"/>
<dbReference type="TubercuList" id="Rv2958c"/>
<dbReference type="eggNOG" id="COG1819">
    <property type="taxonomic scope" value="Bacteria"/>
</dbReference>
<dbReference type="InParanoid" id="P9WFR1"/>
<dbReference type="OrthoDB" id="6620093at2"/>
<dbReference type="PhylomeDB" id="P9WFR1"/>
<dbReference type="BioCyc" id="MetaCyc:G185E-7212-MONOMER"/>
<dbReference type="Proteomes" id="UP000001584">
    <property type="component" value="Chromosome"/>
</dbReference>
<dbReference type="GO" id="GO:0005886">
    <property type="term" value="C:plasma membrane"/>
    <property type="evidence" value="ECO:0007005"/>
    <property type="project" value="MTBBASE"/>
</dbReference>
<dbReference type="GO" id="GO:0016758">
    <property type="term" value="F:hexosyltransferase activity"/>
    <property type="evidence" value="ECO:0000314"/>
    <property type="project" value="MTBBASE"/>
</dbReference>
<dbReference type="GO" id="GO:0008194">
    <property type="term" value="F:UDP-glycosyltransferase activity"/>
    <property type="evidence" value="ECO:0000318"/>
    <property type="project" value="GO_Central"/>
</dbReference>
<dbReference type="GO" id="GO:0009247">
    <property type="term" value="P:glycolipid biosynthetic process"/>
    <property type="evidence" value="ECO:0000315"/>
    <property type="project" value="MTBBASE"/>
</dbReference>
<dbReference type="CDD" id="cd03784">
    <property type="entry name" value="GT1_Gtf-like"/>
    <property type="match status" value="1"/>
</dbReference>
<dbReference type="FunFam" id="3.40.50.2000:FF:000072">
    <property type="entry name" value="Glycosyl transferase"/>
    <property type="match status" value="1"/>
</dbReference>
<dbReference type="Gene3D" id="3.40.50.2000">
    <property type="entry name" value="Glycogen Phosphorylase B"/>
    <property type="match status" value="2"/>
</dbReference>
<dbReference type="InterPro" id="IPR010610">
    <property type="entry name" value="EryCIII-like_C"/>
</dbReference>
<dbReference type="InterPro" id="IPR002213">
    <property type="entry name" value="UDP_glucos_trans"/>
</dbReference>
<dbReference type="PANTHER" id="PTHR21015:SF22">
    <property type="entry name" value="GLYCOSYLTRANSFERASE"/>
    <property type="match status" value="1"/>
</dbReference>
<dbReference type="PANTHER" id="PTHR21015">
    <property type="entry name" value="UDP-N-ACETYLGLUCOSAMINE--N-ACETYLMURAMYL-(PENTAPEPTIDE) PYROPHOSPHORYL-UNDECAPRENOL N-ACETYLGLUCOSAMINE TRANSFERASE 1"/>
    <property type="match status" value="1"/>
</dbReference>
<dbReference type="Pfam" id="PF06722">
    <property type="entry name" value="EryCIII-like_C"/>
    <property type="match status" value="1"/>
</dbReference>
<dbReference type="SUPFAM" id="SSF53756">
    <property type="entry name" value="UDP-Glycosyltransferase/glycogen phosphorylase"/>
    <property type="match status" value="1"/>
</dbReference>
<gene>
    <name type="ordered locus">Rv2958c</name>
</gene>
<accession>P9WFR1</accession>
<accession>L0TE23</accession>
<accession>P95134</accession>
<accession>Q50458</accession>
<accession>Q7D6D1</accession>
<evidence type="ECO:0000256" key="1">
    <source>
        <dbReference type="SAM" id="MobiDB-lite"/>
    </source>
</evidence>
<evidence type="ECO:0000269" key="2">
    <source>
    </source>
</evidence>
<evidence type="ECO:0000305" key="3"/>
<keyword id="KW-0328">Glycosyltransferase</keyword>
<keyword id="KW-1185">Reference proteome</keyword>
<keyword id="KW-0808">Transferase</keyword>
<name>GLTR2_MYCTU</name>
<feature type="chain" id="PRO_0000314436" description="PGL/p-HBAD biosynthesis glycosyltransferase Rv2958c">
    <location>
        <begin position="1"/>
        <end position="428"/>
    </location>
</feature>
<feature type="region of interest" description="Disordered" evidence="1">
    <location>
        <begin position="1"/>
        <end position="23"/>
    </location>
</feature>
<feature type="sequence conflict" description="In Ref. 1; AAA50940." evidence="3" ref="1">
    <original>S</original>
    <variation>L</variation>
    <location>
        <position position="328"/>
    </location>
</feature>
<protein>
    <recommendedName>
        <fullName>PGL/p-HBAD biosynthesis glycosyltransferase Rv2958c</fullName>
        <ecNumber>2.4.1.-</ecNumber>
    </recommendedName>
</protein>
<sequence length="428" mass="46796">MEETSVAGDPGPDAGTSTAPNAAPEPVARRQRILFVGEAATLAHVVRPFVLARSLDPSRYEVHFACDPRFNKLLGPLPFPHHPIHTVPSEEVLLKIAQGRLFYNTRTLRKYIAADRKILNEIAPDVVVGDNRLSLSVSARLAGIPYIAIANAYWSPQARRRFPLPDVPWTRFFGVRPVSILYRLYRPLIFALYCLPLNWLRRKHGLSSLGWDLCRIFTDGDYTLYADVPELVPTYNLPANHRYLGPVLWSPDVKPPTWWHSLPTDRPIIYATLGSSGGKNLLQVVLNALADLPVTVIAATAGRNHLKNVPANAFVADYLPGEAAAARSAVVLCNGGSPTTQQALAAGVPVIGLPSNMDQHLNMEALERAGAGVLLRTERLNTEGVAAAVKQVLSGAEFRQAARRLAEAFGPDFAGFPQHIESALRLVC</sequence>